<feature type="chain" id="PRO_1000075993" description="S-adenosylmethionine:tRNA ribosyltransferase-isomerase">
    <location>
        <begin position="1"/>
        <end position="363"/>
    </location>
</feature>
<proteinExistence type="inferred from homology"/>
<gene>
    <name evidence="1" type="primary">queA</name>
    <name type="ordered locus">BCAN_A1110</name>
</gene>
<keyword id="KW-0963">Cytoplasm</keyword>
<keyword id="KW-0671">Queuosine biosynthesis</keyword>
<keyword id="KW-1185">Reference proteome</keyword>
<keyword id="KW-0949">S-adenosyl-L-methionine</keyword>
<keyword id="KW-0808">Transferase</keyword>
<sequence length="363" mass="40174">MRVDLFDFDLPEERIALRPVEPRDHAKLLHVRPGEPFEDRHVYDLPDLLQPGDALVFNDTKVIPAQLEGMRERTGNISQVSATLHMRVGPDRWKAFLRPAKRVKEGDRIRFGHSGTSCFLGTLDATVAEKGDSGEALLVFDLSGAVLDEAIAAVGHIPLPPYIASKRPEDERDRKDYQTVYAREEGAVAAPTAGLHFTPDLLEKIKARGIEEHFVTLHVGAGTFLPVKADDTGDHKMHAEIGHVSQRTASALNAVHERGGRIICVGTTSLRLIESATGEDGVVRPWSGATDIFITPGYRFRAVDLLMTNFHLPRSTLFMLVSAFSGLDTMHAAYNYAIADGYRFYSYGDASLLERIDHDRHSA</sequence>
<accession>A9M5A4</accession>
<dbReference type="EC" id="2.4.99.17" evidence="1"/>
<dbReference type="EMBL" id="CP000872">
    <property type="protein sequence ID" value="ABX62159.1"/>
    <property type="molecule type" value="Genomic_DNA"/>
</dbReference>
<dbReference type="RefSeq" id="WP_002964220.1">
    <property type="nucleotide sequence ID" value="NC_010103.1"/>
</dbReference>
<dbReference type="SMR" id="A9M5A4"/>
<dbReference type="GeneID" id="97533650"/>
<dbReference type="KEGG" id="bcs:BCAN_A1110"/>
<dbReference type="HOGENOM" id="CLU_039110_1_1_5"/>
<dbReference type="PhylomeDB" id="A9M5A4"/>
<dbReference type="UniPathway" id="UPA00392"/>
<dbReference type="Proteomes" id="UP000001385">
    <property type="component" value="Chromosome I"/>
</dbReference>
<dbReference type="GO" id="GO:0005737">
    <property type="term" value="C:cytoplasm"/>
    <property type="evidence" value="ECO:0007669"/>
    <property type="project" value="UniProtKB-SubCell"/>
</dbReference>
<dbReference type="GO" id="GO:0051075">
    <property type="term" value="F:S-adenosylmethionine:tRNA ribosyltransferase-isomerase activity"/>
    <property type="evidence" value="ECO:0007669"/>
    <property type="project" value="UniProtKB-EC"/>
</dbReference>
<dbReference type="GO" id="GO:0008616">
    <property type="term" value="P:queuosine biosynthetic process"/>
    <property type="evidence" value="ECO:0007669"/>
    <property type="project" value="UniProtKB-UniRule"/>
</dbReference>
<dbReference type="GO" id="GO:0002099">
    <property type="term" value="P:tRNA wobble guanine modification"/>
    <property type="evidence" value="ECO:0007669"/>
    <property type="project" value="TreeGrafter"/>
</dbReference>
<dbReference type="FunFam" id="3.40.1780.10:FF:000001">
    <property type="entry name" value="S-adenosylmethionine:tRNA ribosyltransferase-isomerase"/>
    <property type="match status" value="1"/>
</dbReference>
<dbReference type="Gene3D" id="2.40.10.240">
    <property type="entry name" value="QueA-like"/>
    <property type="match status" value="1"/>
</dbReference>
<dbReference type="Gene3D" id="3.40.1780.10">
    <property type="entry name" value="QueA-like"/>
    <property type="match status" value="1"/>
</dbReference>
<dbReference type="HAMAP" id="MF_00113">
    <property type="entry name" value="QueA"/>
    <property type="match status" value="1"/>
</dbReference>
<dbReference type="InterPro" id="IPR003699">
    <property type="entry name" value="QueA"/>
</dbReference>
<dbReference type="InterPro" id="IPR042118">
    <property type="entry name" value="QueA_dom1"/>
</dbReference>
<dbReference type="InterPro" id="IPR042119">
    <property type="entry name" value="QueA_dom2"/>
</dbReference>
<dbReference type="InterPro" id="IPR036100">
    <property type="entry name" value="QueA_sf"/>
</dbReference>
<dbReference type="NCBIfam" id="NF001140">
    <property type="entry name" value="PRK00147.1"/>
    <property type="match status" value="1"/>
</dbReference>
<dbReference type="NCBIfam" id="TIGR00113">
    <property type="entry name" value="queA"/>
    <property type="match status" value="1"/>
</dbReference>
<dbReference type="PANTHER" id="PTHR30307">
    <property type="entry name" value="S-ADENOSYLMETHIONINE:TRNA RIBOSYLTRANSFERASE-ISOMERASE"/>
    <property type="match status" value="1"/>
</dbReference>
<dbReference type="PANTHER" id="PTHR30307:SF0">
    <property type="entry name" value="S-ADENOSYLMETHIONINE:TRNA RIBOSYLTRANSFERASE-ISOMERASE"/>
    <property type="match status" value="1"/>
</dbReference>
<dbReference type="Pfam" id="PF02547">
    <property type="entry name" value="Queuosine_synth"/>
    <property type="match status" value="1"/>
</dbReference>
<dbReference type="SUPFAM" id="SSF111337">
    <property type="entry name" value="QueA-like"/>
    <property type="match status" value="1"/>
</dbReference>
<protein>
    <recommendedName>
        <fullName evidence="1">S-adenosylmethionine:tRNA ribosyltransferase-isomerase</fullName>
        <ecNumber evidence="1">2.4.99.17</ecNumber>
    </recommendedName>
    <alternativeName>
        <fullName evidence="1">Queuosine biosynthesis protein QueA</fullName>
    </alternativeName>
</protein>
<evidence type="ECO:0000255" key="1">
    <source>
        <dbReference type="HAMAP-Rule" id="MF_00113"/>
    </source>
</evidence>
<comment type="function">
    <text evidence="1">Transfers and isomerizes the ribose moiety from AdoMet to the 7-aminomethyl group of 7-deazaguanine (preQ1-tRNA) to give epoxyqueuosine (oQ-tRNA).</text>
</comment>
<comment type="catalytic activity">
    <reaction evidence="1">
        <text>7-aminomethyl-7-carbaguanosine(34) in tRNA + S-adenosyl-L-methionine = epoxyqueuosine(34) in tRNA + adenine + L-methionine + 2 H(+)</text>
        <dbReference type="Rhea" id="RHEA:32155"/>
        <dbReference type="Rhea" id="RHEA-COMP:10342"/>
        <dbReference type="Rhea" id="RHEA-COMP:18582"/>
        <dbReference type="ChEBI" id="CHEBI:15378"/>
        <dbReference type="ChEBI" id="CHEBI:16708"/>
        <dbReference type="ChEBI" id="CHEBI:57844"/>
        <dbReference type="ChEBI" id="CHEBI:59789"/>
        <dbReference type="ChEBI" id="CHEBI:82833"/>
        <dbReference type="ChEBI" id="CHEBI:194443"/>
        <dbReference type="EC" id="2.4.99.17"/>
    </reaction>
</comment>
<comment type="pathway">
    <text evidence="1">tRNA modification; tRNA-queuosine biosynthesis.</text>
</comment>
<comment type="subunit">
    <text evidence="1">Monomer.</text>
</comment>
<comment type="subcellular location">
    <subcellularLocation>
        <location evidence="1">Cytoplasm</location>
    </subcellularLocation>
</comment>
<comment type="similarity">
    <text evidence="1">Belongs to the QueA family.</text>
</comment>
<organism>
    <name type="scientific">Brucella canis (strain ATCC 23365 / NCTC 10854 / RM-666)</name>
    <dbReference type="NCBI Taxonomy" id="483179"/>
    <lineage>
        <taxon>Bacteria</taxon>
        <taxon>Pseudomonadati</taxon>
        <taxon>Pseudomonadota</taxon>
        <taxon>Alphaproteobacteria</taxon>
        <taxon>Hyphomicrobiales</taxon>
        <taxon>Brucellaceae</taxon>
        <taxon>Brucella/Ochrobactrum group</taxon>
        <taxon>Brucella</taxon>
    </lineage>
</organism>
<name>QUEA_BRUC2</name>
<reference key="1">
    <citation type="submission" date="2007-10" db="EMBL/GenBank/DDBJ databases">
        <title>Brucella canis ATCC 23365 whole genome shotgun sequencing project.</title>
        <authorList>
            <person name="Setubal J.C."/>
            <person name="Bowns C."/>
            <person name="Boyle S."/>
            <person name="Crasta O.R."/>
            <person name="Czar M.J."/>
            <person name="Dharmanolla C."/>
            <person name="Gillespie J.J."/>
            <person name="Kenyon R.W."/>
            <person name="Lu J."/>
            <person name="Mane S."/>
            <person name="Mohapatra S."/>
            <person name="Nagrani S."/>
            <person name="Purkayastha A."/>
            <person name="Rajasimha H.K."/>
            <person name="Shallom J.M."/>
            <person name="Shallom S."/>
            <person name="Shukla M."/>
            <person name="Snyder E.E."/>
            <person name="Sobral B.W."/>
            <person name="Wattam A.R."/>
            <person name="Will R."/>
            <person name="Williams K."/>
            <person name="Yoo H."/>
            <person name="Bruce D."/>
            <person name="Detter C."/>
            <person name="Munk C."/>
            <person name="Brettin T.S."/>
        </authorList>
    </citation>
    <scope>NUCLEOTIDE SEQUENCE [LARGE SCALE GENOMIC DNA]</scope>
    <source>
        <strain>ATCC 23365 / NCTC 10854 / RM-666</strain>
    </source>
</reference>